<proteinExistence type="inferred from homology"/>
<evidence type="ECO:0000255" key="1">
    <source>
        <dbReference type="HAMAP-Rule" id="MF_00176"/>
    </source>
</evidence>
<dbReference type="EC" id="6.1.1.11" evidence="1"/>
<dbReference type="EMBL" id="CP001089">
    <property type="protein sequence ID" value="ACD96942.1"/>
    <property type="molecule type" value="Genomic_DNA"/>
</dbReference>
<dbReference type="RefSeq" id="WP_012471266.1">
    <property type="nucleotide sequence ID" value="NC_010814.1"/>
</dbReference>
<dbReference type="SMR" id="B3EAQ9"/>
<dbReference type="STRING" id="398767.Glov_3236"/>
<dbReference type="KEGG" id="glo:Glov_3236"/>
<dbReference type="eggNOG" id="COG0172">
    <property type="taxonomic scope" value="Bacteria"/>
</dbReference>
<dbReference type="HOGENOM" id="CLU_023797_1_1_7"/>
<dbReference type="OrthoDB" id="9804647at2"/>
<dbReference type="UniPathway" id="UPA00906">
    <property type="reaction ID" value="UER00895"/>
</dbReference>
<dbReference type="Proteomes" id="UP000002420">
    <property type="component" value="Chromosome"/>
</dbReference>
<dbReference type="GO" id="GO:0005737">
    <property type="term" value="C:cytoplasm"/>
    <property type="evidence" value="ECO:0007669"/>
    <property type="project" value="UniProtKB-SubCell"/>
</dbReference>
<dbReference type="GO" id="GO:0005524">
    <property type="term" value="F:ATP binding"/>
    <property type="evidence" value="ECO:0007669"/>
    <property type="project" value="UniProtKB-UniRule"/>
</dbReference>
<dbReference type="GO" id="GO:0004828">
    <property type="term" value="F:serine-tRNA ligase activity"/>
    <property type="evidence" value="ECO:0007669"/>
    <property type="project" value="UniProtKB-UniRule"/>
</dbReference>
<dbReference type="GO" id="GO:0016260">
    <property type="term" value="P:selenocysteine biosynthetic process"/>
    <property type="evidence" value="ECO:0007669"/>
    <property type="project" value="UniProtKB-UniRule"/>
</dbReference>
<dbReference type="GO" id="GO:0006434">
    <property type="term" value="P:seryl-tRNA aminoacylation"/>
    <property type="evidence" value="ECO:0007669"/>
    <property type="project" value="UniProtKB-UniRule"/>
</dbReference>
<dbReference type="CDD" id="cd00770">
    <property type="entry name" value="SerRS_core"/>
    <property type="match status" value="1"/>
</dbReference>
<dbReference type="Gene3D" id="3.30.930.10">
    <property type="entry name" value="Bira Bifunctional Protein, Domain 2"/>
    <property type="match status" value="1"/>
</dbReference>
<dbReference type="Gene3D" id="1.10.287.40">
    <property type="entry name" value="Serine-tRNA synthetase, tRNA binding domain"/>
    <property type="match status" value="1"/>
</dbReference>
<dbReference type="HAMAP" id="MF_00176">
    <property type="entry name" value="Ser_tRNA_synth_type1"/>
    <property type="match status" value="1"/>
</dbReference>
<dbReference type="InterPro" id="IPR002314">
    <property type="entry name" value="aa-tRNA-synt_IIb"/>
</dbReference>
<dbReference type="InterPro" id="IPR006195">
    <property type="entry name" value="aa-tRNA-synth_II"/>
</dbReference>
<dbReference type="InterPro" id="IPR045864">
    <property type="entry name" value="aa-tRNA-synth_II/BPL/LPL"/>
</dbReference>
<dbReference type="InterPro" id="IPR002317">
    <property type="entry name" value="Ser-tRNA-ligase_type_1"/>
</dbReference>
<dbReference type="InterPro" id="IPR015866">
    <property type="entry name" value="Ser-tRNA-synth_1_N"/>
</dbReference>
<dbReference type="InterPro" id="IPR042103">
    <property type="entry name" value="SerRS_1_N_sf"/>
</dbReference>
<dbReference type="InterPro" id="IPR033729">
    <property type="entry name" value="SerRS_core"/>
</dbReference>
<dbReference type="InterPro" id="IPR010978">
    <property type="entry name" value="tRNA-bd_arm"/>
</dbReference>
<dbReference type="NCBIfam" id="TIGR00414">
    <property type="entry name" value="serS"/>
    <property type="match status" value="1"/>
</dbReference>
<dbReference type="PANTHER" id="PTHR43697:SF1">
    <property type="entry name" value="SERINE--TRNA LIGASE"/>
    <property type="match status" value="1"/>
</dbReference>
<dbReference type="PANTHER" id="PTHR43697">
    <property type="entry name" value="SERYL-TRNA SYNTHETASE"/>
    <property type="match status" value="1"/>
</dbReference>
<dbReference type="Pfam" id="PF02403">
    <property type="entry name" value="Seryl_tRNA_N"/>
    <property type="match status" value="1"/>
</dbReference>
<dbReference type="Pfam" id="PF00587">
    <property type="entry name" value="tRNA-synt_2b"/>
    <property type="match status" value="1"/>
</dbReference>
<dbReference type="PIRSF" id="PIRSF001529">
    <property type="entry name" value="Ser-tRNA-synth_IIa"/>
    <property type="match status" value="1"/>
</dbReference>
<dbReference type="PRINTS" id="PR00981">
    <property type="entry name" value="TRNASYNTHSER"/>
</dbReference>
<dbReference type="SUPFAM" id="SSF55681">
    <property type="entry name" value="Class II aaRS and biotin synthetases"/>
    <property type="match status" value="1"/>
</dbReference>
<dbReference type="SUPFAM" id="SSF46589">
    <property type="entry name" value="tRNA-binding arm"/>
    <property type="match status" value="1"/>
</dbReference>
<dbReference type="PROSITE" id="PS50862">
    <property type="entry name" value="AA_TRNA_LIGASE_II"/>
    <property type="match status" value="1"/>
</dbReference>
<comment type="function">
    <text evidence="1">Catalyzes the attachment of serine to tRNA(Ser). Is also able to aminoacylate tRNA(Sec) with serine, to form the misacylated tRNA L-seryl-tRNA(Sec), which will be further converted into selenocysteinyl-tRNA(Sec).</text>
</comment>
<comment type="catalytic activity">
    <reaction evidence="1">
        <text>tRNA(Ser) + L-serine + ATP = L-seryl-tRNA(Ser) + AMP + diphosphate + H(+)</text>
        <dbReference type="Rhea" id="RHEA:12292"/>
        <dbReference type="Rhea" id="RHEA-COMP:9669"/>
        <dbReference type="Rhea" id="RHEA-COMP:9703"/>
        <dbReference type="ChEBI" id="CHEBI:15378"/>
        <dbReference type="ChEBI" id="CHEBI:30616"/>
        <dbReference type="ChEBI" id="CHEBI:33019"/>
        <dbReference type="ChEBI" id="CHEBI:33384"/>
        <dbReference type="ChEBI" id="CHEBI:78442"/>
        <dbReference type="ChEBI" id="CHEBI:78533"/>
        <dbReference type="ChEBI" id="CHEBI:456215"/>
        <dbReference type="EC" id="6.1.1.11"/>
    </reaction>
</comment>
<comment type="catalytic activity">
    <reaction evidence="1">
        <text>tRNA(Sec) + L-serine + ATP = L-seryl-tRNA(Sec) + AMP + diphosphate + H(+)</text>
        <dbReference type="Rhea" id="RHEA:42580"/>
        <dbReference type="Rhea" id="RHEA-COMP:9742"/>
        <dbReference type="Rhea" id="RHEA-COMP:10128"/>
        <dbReference type="ChEBI" id="CHEBI:15378"/>
        <dbReference type="ChEBI" id="CHEBI:30616"/>
        <dbReference type="ChEBI" id="CHEBI:33019"/>
        <dbReference type="ChEBI" id="CHEBI:33384"/>
        <dbReference type="ChEBI" id="CHEBI:78442"/>
        <dbReference type="ChEBI" id="CHEBI:78533"/>
        <dbReference type="ChEBI" id="CHEBI:456215"/>
        <dbReference type="EC" id="6.1.1.11"/>
    </reaction>
</comment>
<comment type="pathway">
    <text evidence="1">Aminoacyl-tRNA biosynthesis; selenocysteinyl-tRNA(Sec) biosynthesis; L-seryl-tRNA(Sec) from L-serine and tRNA(Sec): step 1/1.</text>
</comment>
<comment type="subunit">
    <text evidence="1">Homodimer. The tRNA molecule binds across the dimer.</text>
</comment>
<comment type="subcellular location">
    <subcellularLocation>
        <location evidence="1">Cytoplasm</location>
    </subcellularLocation>
</comment>
<comment type="domain">
    <text evidence="1">Consists of two distinct domains, a catalytic core and a N-terminal extension that is involved in tRNA binding.</text>
</comment>
<comment type="similarity">
    <text evidence="1">Belongs to the class-II aminoacyl-tRNA synthetase family. Type-1 seryl-tRNA synthetase subfamily.</text>
</comment>
<organism>
    <name type="scientific">Trichlorobacter lovleyi (strain ATCC BAA-1151 / DSM 17278 / SZ)</name>
    <name type="common">Geobacter lovleyi</name>
    <dbReference type="NCBI Taxonomy" id="398767"/>
    <lineage>
        <taxon>Bacteria</taxon>
        <taxon>Pseudomonadati</taxon>
        <taxon>Thermodesulfobacteriota</taxon>
        <taxon>Desulfuromonadia</taxon>
        <taxon>Geobacterales</taxon>
        <taxon>Geobacteraceae</taxon>
        <taxon>Trichlorobacter</taxon>
    </lineage>
</organism>
<gene>
    <name evidence="1" type="primary">serS</name>
    <name type="ordered locus">Glov_3236</name>
</gene>
<keyword id="KW-0030">Aminoacyl-tRNA synthetase</keyword>
<keyword id="KW-0067">ATP-binding</keyword>
<keyword id="KW-0963">Cytoplasm</keyword>
<keyword id="KW-0436">Ligase</keyword>
<keyword id="KW-0547">Nucleotide-binding</keyword>
<keyword id="KW-0648">Protein biosynthesis</keyword>
<keyword id="KW-1185">Reference proteome</keyword>
<protein>
    <recommendedName>
        <fullName evidence="1">Serine--tRNA ligase</fullName>
        <ecNumber evidence="1">6.1.1.11</ecNumber>
    </recommendedName>
    <alternativeName>
        <fullName evidence="1">Seryl-tRNA synthetase</fullName>
        <shortName evidence="1">SerRS</shortName>
    </alternativeName>
    <alternativeName>
        <fullName evidence="1">Seryl-tRNA(Ser/Sec) synthetase</fullName>
    </alternativeName>
</protein>
<accession>B3EAQ9</accession>
<name>SYS_TRIL1</name>
<feature type="chain" id="PRO_1000098072" description="Serine--tRNA ligase">
    <location>
        <begin position="1"/>
        <end position="423"/>
    </location>
</feature>
<feature type="binding site" evidence="1">
    <location>
        <begin position="229"/>
        <end position="231"/>
    </location>
    <ligand>
        <name>L-serine</name>
        <dbReference type="ChEBI" id="CHEBI:33384"/>
    </ligand>
</feature>
<feature type="binding site" evidence="1">
    <location>
        <begin position="260"/>
        <end position="262"/>
    </location>
    <ligand>
        <name>ATP</name>
        <dbReference type="ChEBI" id="CHEBI:30616"/>
    </ligand>
</feature>
<feature type="binding site" evidence="1">
    <location>
        <position position="283"/>
    </location>
    <ligand>
        <name>L-serine</name>
        <dbReference type="ChEBI" id="CHEBI:33384"/>
    </ligand>
</feature>
<feature type="binding site" evidence="1">
    <location>
        <begin position="347"/>
        <end position="350"/>
    </location>
    <ligand>
        <name>ATP</name>
        <dbReference type="ChEBI" id="CHEBI:30616"/>
    </ligand>
</feature>
<feature type="binding site" evidence="1">
    <location>
        <position position="383"/>
    </location>
    <ligand>
        <name>L-serine</name>
        <dbReference type="ChEBI" id="CHEBI:33384"/>
    </ligand>
</feature>
<sequence length="423" mass="47807">MLDVKFIRDNLDQAEAALATRGGAISLARFRELDAQRRKLLTESETLKALKNSVSEEIAKVKDKSTVKDKIAEMKEVSAKIKTFDDELKIVEEEFDTLLMTIPNLPHPTTPVGKSEEENVIVRSWGSLPEMAFEPKPHWDLAEDLDILDFERATKITGARFCLSKRAGARLERALISFMLDLHSTEHGYTEVLPPFMVNRASMTGTGQLPKFEEDLFRLMDPEYFLIPTAEVPVTNIHRDEILKKSDLPISYTAYTPCFRREAGSYGKDTRGLIRQHQFNKVELVKFVHPDESQAELEKLTGHAEKVLQLLELPYRVMALCSGDIGFSACKTYDLEVWLPSQNTYREISSCSSFGDFQARRAGIRFREDEKSKPEFVHTLNGSGLAVGRTLVAILENYQQADGSIIIPTALRPYMGGIEKITK</sequence>
<reference key="1">
    <citation type="submission" date="2008-05" db="EMBL/GenBank/DDBJ databases">
        <title>Complete sequence of chromosome of Geobacter lovleyi SZ.</title>
        <authorList>
            <consortium name="US DOE Joint Genome Institute"/>
            <person name="Lucas S."/>
            <person name="Copeland A."/>
            <person name="Lapidus A."/>
            <person name="Glavina del Rio T."/>
            <person name="Dalin E."/>
            <person name="Tice H."/>
            <person name="Bruce D."/>
            <person name="Goodwin L."/>
            <person name="Pitluck S."/>
            <person name="Chertkov O."/>
            <person name="Meincke L."/>
            <person name="Brettin T."/>
            <person name="Detter J.C."/>
            <person name="Han C."/>
            <person name="Tapia R."/>
            <person name="Kuske C.R."/>
            <person name="Schmutz J."/>
            <person name="Larimer F."/>
            <person name="Land M."/>
            <person name="Hauser L."/>
            <person name="Kyrpides N."/>
            <person name="Mikhailova N."/>
            <person name="Sung Y."/>
            <person name="Fletcher K.E."/>
            <person name="Ritalahti K.M."/>
            <person name="Loeffler F.E."/>
            <person name="Richardson P."/>
        </authorList>
    </citation>
    <scope>NUCLEOTIDE SEQUENCE [LARGE SCALE GENOMIC DNA]</scope>
    <source>
        <strain>ATCC BAA-1151 / DSM 17278 / SZ</strain>
    </source>
</reference>